<feature type="chain" id="PRO_0000105387" description="Sodium-dependent multivitamin transporter">
    <location>
        <begin position="1"/>
        <end position="634"/>
    </location>
</feature>
<feature type="transmembrane region" description="Helical" evidence="2">
    <location>
        <begin position="23"/>
        <end position="43"/>
    </location>
</feature>
<feature type="transmembrane region" description="Helical" evidence="2">
    <location>
        <begin position="65"/>
        <end position="85"/>
    </location>
</feature>
<feature type="transmembrane region" description="Helical" evidence="2">
    <location>
        <begin position="100"/>
        <end position="120"/>
    </location>
</feature>
<feature type="transmembrane region" description="Helical" evidence="2">
    <location>
        <begin position="142"/>
        <end position="162"/>
    </location>
</feature>
<feature type="transmembrane region" description="Helical" evidence="2">
    <location>
        <begin position="175"/>
        <end position="195"/>
    </location>
</feature>
<feature type="transmembrane region" description="Helical" evidence="2">
    <location>
        <begin position="207"/>
        <end position="227"/>
    </location>
</feature>
<feature type="transmembrane region" description="Helical" evidence="2">
    <location>
        <begin position="255"/>
        <end position="275"/>
    </location>
</feature>
<feature type="transmembrane region" description="Helical" evidence="2">
    <location>
        <begin position="295"/>
        <end position="315"/>
    </location>
</feature>
<feature type="transmembrane region" description="Helical" evidence="2">
    <location>
        <begin position="350"/>
        <end position="370"/>
    </location>
</feature>
<feature type="transmembrane region" description="Helical" evidence="2">
    <location>
        <begin position="403"/>
        <end position="423"/>
    </location>
</feature>
<feature type="transmembrane region" description="Helical" evidence="2">
    <location>
        <begin position="427"/>
        <end position="447"/>
    </location>
</feature>
<feature type="transmembrane region" description="Helical" evidence="2">
    <location>
        <begin position="455"/>
        <end position="475"/>
    </location>
</feature>
<feature type="transmembrane region" description="Helical" evidence="2">
    <location>
        <begin position="526"/>
        <end position="546"/>
    </location>
</feature>
<feature type="glycosylation site" description="N-linked (GlcNAc...) asparagine" evidence="2">
    <location>
        <position position="488"/>
    </location>
</feature>
<feature type="glycosylation site" description="N-linked (GlcNAc...) asparagine" evidence="2">
    <location>
        <position position="497"/>
    </location>
</feature>
<feature type="sequence conflict" description="In Ref. 4; AAH85132." evidence="8" ref="4">
    <original>V</original>
    <variation>D</variation>
    <location>
        <position position="25"/>
    </location>
</feature>
<dbReference type="EMBL" id="AY572835">
    <property type="protein sequence ID" value="AAS79366.1"/>
    <property type="molecule type" value="mRNA"/>
</dbReference>
<dbReference type="EMBL" id="AK088682">
    <property type="protein sequence ID" value="BAC40502.1"/>
    <property type="molecule type" value="mRNA"/>
</dbReference>
<dbReference type="EMBL" id="AK161633">
    <property type="protein sequence ID" value="BAE36503.1"/>
    <property type="molecule type" value="mRNA"/>
</dbReference>
<dbReference type="EMBL" id="CH466524">
    <property type="protein sequence ID" value="EDL37322.1"/>
    <property type="molecule type" value="Genomic_DNA"/>
</dbReference>
<dbReference type="EMBL" id="BC085132">
    <property type="protein sequence ID" value="AAH85132.1"/>
    <property type="molecule type" value="mRNA"/>
</dbReference>
<dbReference type="EMBL" id="BC117852">
    <property type="protein sequence ID" value="AAI17853.1"/>
    <property type="molecule type" value="mRNA"/>
</dbReference>
<dbReference type="EMBL" id="BC117853">
    <property type="protein sequence ID" value="AAI17854.1"/>
    <property type="molecule type" value="mRNA"/>
</dbReference>
<dbReference type="CCDS" id="CCDS19169.1"/>
<dbReference type="RefSeq" id="NP_001171092.1">
    <property type="nucleotide sequence ID" value="NM_001177621.1"/>
</dbReference>
<dbReference type="RefSeq" id="NP_001171093.1">
    <property type="nucleotide sequence ID" value="NM_001177622.1"/>
</dbReference>
<dbReference type="RefSeq" id="NP_001346951.1">
    <property type="nucleotide sequence ID" value="NM_001360022.1"/>
</dbReference>
<dbReference type="RefSeq" id="NP_808538.1">
    <property type="nucleotide sequence ID" value="NM_177870.5"/>
</dbReference>
<dbReference type="RefSeq" id="XP_011239053.1">
    <property type="nucleotide sequence ID" value="XM_011240751.1"/>
</dbReference>
<dbReference type="SMR" id="Q5U4D8"/>
<dbReference type="BioGRID" id="236889">
    <property type="interactions" value="1"/>
</dbReference>
<dbReference type="FunCoup" id="Q5U4D8">
    <property type="interactions" value="59"/>
</dbReference>
<dbReference type="STRING" id="10090.ENSMUSP00000110316"/>
<dbReference type="GlyCosmos" id="Q5U4D8">
    <property type="glycosylation" value="2 sites, No reported glycans"/>
</dbReference>
<dbReference type="GlyGen" id="Q5U4D8">
    <property type="glycosylation" value="2 sites"/>
</dbReference>
<dbReference type="iPTMnet" id="Q5U4D8"/>
<dbReference type="PhosphoSitePlus" id="Q5U4D8"/>
<dbReference type="SwissPalm" id="Q5U4D8"/>
<dbReference type="jPOST" id="Q5U4D8"/>
<dbReference type="PaxDb" id="10090-ENSMUSP00000110316"/>
<dbReference type="ProteomicsDB" id="255347"/>
<dbReference type="Antibodypedia" id="52501">
    <property type="antibodies" value="189 antibodies from 29 providers"/>
</dbReference>
<dbReference type="DNASU" id="330064"/>
<dbReference type="Ensembl" id="ENSMUST00000080431.8">
    <property type="protein sequence ID" value="ENSMUSP00000079291.2"/>
    <property type="gene ID" value="ENSMUSG00000006641.13"/>
</dbReference>
<dbReference type="Ensembl" id="ENSMUST00000114668.7">
    <property type="protein sequence ID" value="ENSMUSP00000110316.2"/>
    <property type="gene ID" value="ENSMUSG00000006641.13"/>
</dbReference>
<dbReference type="Ensembl" id="ENSMUST00000202520.4">
    <property type="protein sequence ID" value="ENSMUSP00000143938.2"/>
    <property type="gene ID" value="ENSMUSG00000006641.13"/>
</dbReference>
<dbReference type="Ensembl" id="ENSMUST00000202556.4">
    <property type="protein sequence ID" value="ENSMUSP00000143993.2"/>
    <property type="gene ID" value="ENSMUSG00000006641.13"/>
</dbReference>
<dbReference type="GeneID" id="330064"/>
<dbReference type="KEGG" id="mmu:330064"/>
<dbReference type="UCSC" id="uc008wwt.2">
    <property type="organism name" value="mouse"/>
</dbReference>
<dbReference type="AGR" id="MGI:2660847"/>
<dbReference type="CTD" id="8884"/>
<dbReference type="MGI" id="MGI:2660847">
    <property type="gene designation" value="Slc5a6"/>
</dbReference>
<dbReference type="VEuPathDB" id="HostDB:ENSMUSG00000006641"/>
<dbReference type="eggNOG" id="KOG2349">
    <property type="taxonomic scope" value="Eukaryota"/>
</dbReference>
<dbReference type="GeneTree" id="ENSGT00940000155731"/>
<dbReference type="InParanoid" id="Q5U4D8"/>
<dbReference type="OMA" id="GWWGMRR"/>
<dbReference type="OrthoDB" id="6132759at2759"/>
<dbReference type="PhylomeDB" id="Q5U4D8"/>
<dbReference type="TreeFam" id="TF316728"/>
<dbReference type="Reactome" id="R-MMU-196780">
    <property type="pathway name" value="Biotin transport and metabolism"/>
</dbReference>
<dbReference type="Reactome" id="R-MMU-199220">
    <property type="pathway name" value="Vitamin B5 (pantothenate) metabolism"/>
</dbReference>
<dbReference type="Reactome" id="R-MMU-425397">
    <property type="pathway name" value="Transport of vitamins, nucleosides, and related molecules"/>
</dbReference>
<dbReference type="BioGRID-ORCS" id="330064">
    <property type="hits" value="1 hit in 78 CRISPR screens"/>
</dbReference>
<dbReference type="ChiTaRS" id="Slc5a6">
    <property type="organism name" value="mouse"/>
</dbReference>
<dbReference type="PRO" id="PR:Q5U4D8"/>
<dbReference type="Proteomes" id="UP000000589">
    <property type="component" value="Chromosome 5"/>
</dbReference>
<dbReference type="RNAct" id="Q5U4D8">
    <property type="molecule type" value="protein"/>
</dbReference>
<dbReference type="Bgee" id="ENSMUSG00000006641">
    <property type="expression patterns" value="Expressed in choroid plexus of fourth ventricle and 136 other cell types or tissues"/>
</dbReference>
<dbReference type="ExpressionAtlas" id="Q5U4D8">
    <property type="expression patterns" value="baseline and differential"/>
</dbReference>
<dbReference type="GO" id="GO:0016324">
    <property type="term" value="C:apical plasma membrane"/>
    <property type="evidence" value="ECO:0000250"/>
    <property type="project" value="UniProtKB"/>
</dbReference>
<dbReference type="GO" id="GO:0031526">
    <property type="term" value="C:brush border membrane"/>
    <property type="evidence" value="ECO:0007669"/>
    <property type="project" value="Ensembl"/>
</dbReference>
<dbReference type="GO" id="GO:0005886">
    <property type="term" value="C:plasma membrane"/>
    <property type="evidence" value="ECO:0000315"/>
    <property type="project" value="MGI"/>
</dbReference>
<dbReference type="GO" id="GO:0042887">
    <property type="term" value="F:amide transmembrane transporter activity"/>
    <property type="evidence" value="ECO:0000315"/>
    <property type="project" value="MGI"/>
</dbReference>
<dbReference type="GO" id="GO:0015225">
    <property type="term" value="F:biotin transmembrane transporter activity"/>
    <property type="evidence" value="ECO:0000250"/>
    <property type="project" value="UniProtKB"/>
</dbReference>
<dbReference type="GO" id="GO:0015111">
    <property type="term" value="F:iodide transmembrane transporter activity"/>
    <property type="evidence" value="ECO:0000250"/>
    <property type="project" value="UniProtKB"/>
</dbReference>
<dbReference type="GO" id="GO:0140161">
    <property type="term" value="F:monocarboxylate:sodium symporter activity"/>
    <property type="evidence" value="ECO:0000315"/>
    <property type="project" value="MGI"/>
</dbReference>
<dbReference type="GO" id="GO:0015233">
    <property type="term" value="F:pantothenate transmembrane transporter activity"/>
    <property type="evidence" value="ECO:0000315"/>
    <property type="project" value="UniProtKB"/>
</dbReference>
<dbReference type="GO" id="GO:0015498">
    <property type="term" value="F:pantothenate:sodium symporter activity"/>
    <property type="evidence" value="ECO:0000315"/>
    <property type="project" value="MGI"/>
</dbReference>
<dbReference type="GO" id="GO:0008523">
    <property type="term" value="F:sodium-dependent multivitamin transmembrane transporter activity"/>
    <property type="evidence" value="ECO:0000315"/>
    <property type="project" value="MGI"/>
</dbReference>
<dbReference type="GO" id="GO:1901682">
    <property type="term" value="F:sulfur compound transmembrane transporter activity"/>
    <property type="evidence" value="ECO:0000315"/>
    <property type="project" value="MGI"/>
</dbReference>
<dbReference type="GO" id="GO:0090482">
    <property type="term" value="F:vitamin transmembrane transporter activity"/>
    <property type="evidence" value="ECO:0000315"/>
    <property type="project" value="UniProtKB"/>
</dbReference>
<dbReference type="GO" id="GO:1905135">
    <property type="term" value="P:biotin import across plasma membrane"/>
    <property type="evidence" value="ECO:0000250"/>
    <property type="project" value="UniProtKB"/>
</dbReference>
<dbReference type="GO" id="GO:0006768">
    <property type="term" value="P:biotin metabolic process"/>
    <property type="evidence" value="ECO:0000315"/>
    <property type="project" value="MGI"/>
</dbReference>
<dbReference type="GO" id="GO:0015878">
    <property type="term" value="P:biotin transport"/>
    <property type="evidence" value="ECO:0000250"/>
    <property type="project" value="UniProtKB"/>
</dbReference>
<dbReference type="GO" id="GO:1904200">
    <property type="term" value="P:iodide transmembrane transport"/>
    <property type="evidence" value="ECO:0000250"/>
    <property type="project" value="UniProtKB"/>
</dbReference>
<dbReference type="GO" id="GO:0015887">
    <property type="term" value="P:pantothenate transmembrane transport"/>
    <property type="evidence" value="ECO:0000315"/>
    <property type="project" value="UniProtKB"/>
</dbReference>
<dbReference type="GO" id="GO:0150104">
    <property type="term" value="P:transport across blood-brain barrier"/>
    <property type="evidence" value="ECO:0007669"/>
    <property type="project" value="Ensembl"/>
</dbReference>
<dbReference type="FunFam" id="1.20.1730.10:FF:000011">
    <property type="entry name" value="sodium-dependent multivitamin transporter isoform X1"/>
    <property type="match status" value="1"/>
</dbReference>
<dbReference type="Gene3D" id="1.20.1730.10">
    <property type="entry name" value="Sodium/glucose cotransporter"/>
    <property type="match status" value="1"/>
</dbReference>
<dbReference type="InterPro" id="IPR038377">
    <property type="entry name" value="Na/Glc_symporter_sf"/>
</dbReference>
<dbReference type="InterPro" id="IPR001734">
    <property type="entry name" value="Na/solute_symporter"/>
</dbReference>
<dbReference type="InterPro" id="IPR018212">
    <property type="entry name" value="Na/solute_symporter_CS"/>
</dbReference>
<dbReference type="InterPro" id="IPR051163">
    <property type="entry name" value="Sodium:Solute_Symporter_SSF"/>
</dbReference>
<dbReference type="NCBIfam" id="TIGR00813">
    <property type="entry name" value="sss"/>
    <property type="match status" value="1"/>
</dbReference>
<dbReference type="PANTHER" id="PTHR42985">
    <property type="entry name" value="SODIUM-COUPLED MONOCARBOXYLATE TRANSPORTER"/>
    <property type="match status" value="1"/>
</dbReference>
<dbReference type="PANTHER" id="PTHR42985:SF2">
    <property type="entry name" value="SODIUM-DEPENDENT MULTIVITAMIN TRANSPORTER"/>
    <property type="match status" value="1"/>
</dbReference>
<dbReference type="Pfam" id="PF00474">
    <property type="entry name" value="SSF"/>
    <property type="match status" value="1"/>
</dbReference>
<dbReference type="PROSITE" id="PS00456">
    <property type="entry name" value="NA_SOLUT_SYMP_1"/>
    <property type="match status" value="1"/>
</dbReference>
<dbReference type="PROSITE" id="PS50283">
    <property type="entry name" value="NA_SOLUT_SYMP_3"/>
    <property type="match status" value="1"/>
</dbReference>
<sequence length="634" mass="68511">MSVASTAAPFHTTSGSSGAISTFSVVDYVVFGLLLVLSLVIGLYHACRGWGHHTVGELLMADRKMGCLPVALSLLATFQSAVAILGAPAEIFRFGTQYWFLGCSYFLGLLIPAHIFIPVFYRLHLTSAYEYLELRFNKAVRICGTVTFIFQMVIYMGVALYAPSLALNAVTGFDLWLSVLALGIVCNIYTALGGLKAVIWTDVFQTLVMFLGQLVVIIVGAARVGGLGHVWNVTSQHGLISGINLDPDPFVRHTFWTLAFGGVFMMLSLYGVNQAQVQRYLSSHSERAAVLSCYAVFPCQQVALCMSCLIGLVMFAYYNMYSMSPELKQAAPDQLVLYFVMDLLKDMPGLPGLFVACLFSGSLSTISSAFNSLATVTMEDLIQPWFPQLTETRAIMLSRGLAFAYGLVCLGMAYISSHLGSVLQAALSIFGMVGGPLLGLFCLGLFFPCANPLGAIVGLLTGLTMAFWIGIGSIVSRMSSAVAPPPLNGSSSFLPANVTVAAVTTVMPSTLSKPTGLQHFYSLSYLWYSAHNSTTVIVVGLIVSLLTGGMRGRSLNPGTIYPVLPKLLALLPLSCQKRLCWRSHSQDIPVIPNLFPEKMRNGVLQDSTDKERMAEDGLVHQPCSPTYVVQETSL</sequence>
<proteinExistence type="evidence at protein level"/>
<organism>
    <name type="scientific">Mus musculus</name>
    <name type="common">Mouse</name>
    <dbReference type="NCBI Taxonomy" id="10090"/>
    <lineage>
        <taxon>Eukaryota</taxon>
        <taxon>Metazoa</taxon>
        <taxon>Chordata</taxon>
        <taxon>Craniata</taxon>
        <taxon>Vertebrata</taxon>
        <taxon>Euteleostomi</taxon>
        <taxon>Mammalia</taxon>
        <taxon>Eutheria</taxon>
        <taxon>Euarchontoglires</taxon>
        <taxon>Glires</taxon>
        <taxon>Rodentia</taxon>
        <taxon>Myomorpha</taxon>
        <taxon>Muroidea</taxon>
        <taxon>Muridae</taxon>
        <taxon>Murinae</taxon>
        <taxon>Mus</taxon>
        <taxon>Mus</taxon>
    </lineage>
</organism>
<accession>Q5U4D8</accession>
<accession>Q8BTU3</accession>
<comment type="function">
    <text evidence="1 3 4">Sodium-dependent multivitamin transporter that mediates the electrogenic transport of pantothenate, biotin, lipoate and iodide (PubMed:23104561). Functions as a Na(+)-coupled substrate symporter where the stoichiometry of Na(+):substrate is 2:1, creating an electrochemical Na(+) gradient used as driving force for substrate uptake (By similarity). Required for biotin and pantothenate uptake in the intestine across the brush border membrane (PubMed:23104561). Plays a role in the maintenance of intestinal mucosa integrity, by providing the gut mucosa with biotin (PubMed:27492331). Contributes to the luminal uptake of biotin and pantothenate into the brain across the blood-brain barrier (By similarity).</text>
</comment>
<comment type="catalytic activity">
    <reaction evidence="3">
        <text>biotin(out) + 2 Na(+)(out) = biotin(in) + 2 Na(+)(in)</text>
        <dbReference type="Rhea" id="RHEA:73375"/>
        <dbReference type="ChEBI" id="CHEBI:29101"/>
        <dbReference type="ChEBI" id="CHEBI:57586"/>
    </reaction>
</comment>
<comment type="catalytic activity">
    <reaction evidence="3">
        <text>(R)-pantothenate(out) + 2 Na(+)(out) = (R)-pantothenate(in) + 2 Na(+)(in)</text>
        <dbReference type="Rhea" id="RHEA:73371"/>
        <dbReference type="ChEBI" id="CHEBI:29032"/>
        <dbReference type="ChEBI" id="CHEBI:29101"/>
    </reaction>
</comment>
<comment type="catalytic activity">
    <reaction evidence="1">
        <text>(R)-lipoate(out) + 2 Na(+)(out) = (R)-lipoate(in) + 2 Na(+)(in)</text>
        <dbReference type="Rhea" id="RHEA:73379"/>
        <dbReference type="ChEBI" id="CHEBI:29101"/>
        <dbReference type="ChEBI" id="CHEBI:83088"/>
    </reaction>
</comment>
<comment type="catalytic activity">
    <reaction evidence="1">
        <text>iodide(out) + 2 Na(+)(out) = iodide(in) + 2 Na(+)(in)</text>
        <dbReference type="Rhea" id="RHEA:71207"/>
        <dbReference type="ChEBI" id="CHEBI:16382"/>
        <dbReference type="ChEBI" id="CHEBI:29101"/>
    </reaction>
</comment>
<comment type="subunit">
    <text evidence="1">Interacts with PDZD11.</text>
</comment>
<comment type="subcellular location">
    <subcellularLocation>
        <location evidence="1">Cell membrane</location>
        <topology evidence="2">Multi-pass membrane protein</topology>
    </subcellularLocation>
    <subcellularLocation>
        <location evidence="1">Apical cell membrane</location>
        <topology evidence="2">Multi-pass membrane protein</topology>
    </subcellularLocation>
</comment>
<comment type="tissue specificity">
    <text evidence="3 5">Expressed in the intestinal mucosa, liver and kidney (at protein level) (PubMed:23104561). Expressed in the colon (PubMed:28052864).</text>
</comment>
<comment type="domain">
    <text evidence="1">The C-terminal tail is important for biotin uptake as well as apical localization in polarized cells.</text>
</comment>
<comment type="disruption phenotype">
    <text evidence="3 4">Intestine-specific knockout leads to premature lethality between the age of 6 and 10 weeks in around two-thirds of mice due to acute peritonitis (PubMed:23104561). Growth retardation, decreased bone density of the femoral and humoral head, decreased bone length of the pelvic, tibial, and femoral bones, lethargic behavior, hunched back posture, and decreased biotin status are observed (PubMed:23104561). Abnormalities in the small bowel with shortened villi and dysplasia, chronic active inflammation with focal cryptitis/crypt abscesses in the cecum, an increase in the number of neutrophils in the mucosa and low-grade adenomatous changes and extensive submucosal edema (PubMed:23104561). Impaired carrier-mediated biotin and pantothenate uptake in the jejunum (PubMed:23104561). Reduced biotin levels in the liver (PubMed:23104561). Increase in gut permeability and changes in the level of expression of tight junction proteins in the cecum and colon (PubMed:27492331).</text>
</comment>
<comment type="similarity">
    <text evidence="8">Belongs to the sodium:solute symporter (SSF) (TC 2.A.21) family.</text>
</comment>
<keyword id="KW-0092">Biotin</keyword>
<keyword id="KW-1003">Cell membrane</keyword>
<keyword id="KW-0325">Glycoprotein</keyword>
<keyword id="KW-0406">Ion transport</keyword>
<keyword id="KW-0472">Membrane</keyword>
<keyword id="KW-1185">Reference proteome</keyword>
<keyword id="KW-0915">Sodium</keyword>
<keyword id="KW-0739">Sodium transport</keyword>
<keyword id="KW-0769">Symport</keyword>
<keyword id="KW-0812">Transmembrane</keyword>
<keyword id="KW-1133">Transmembrane helix</keyword>
<keyword id="KW-0813">Transport</keyword>
<name>SC5A6_MOUSE</name>
<evidence type="ECO:0000250" key="1">
    <source>
        <dbReference type="UniProtKB" id="Q9Y289"/>
    </source>
</evidence>
<evidence type="ECO:0000255" key="2"/>
<evidence type="ECO:0000269" key="3">
    <source>
    </source>
</evidence>
<evidence type="ECO:0000269" key="4">
    <source>
    </source>
</evidence>
<evidence type="ECO:0000269" key="5">
    <source>
    </source>
</evidence>
<evidence type="ECO:0000303" key="6">
    <source>
    </source>
</evidence>
<evidence type="ECO:0000303" key="7">
    <source>
    </source>
</evidence>
<evidence type="ECO:0000305" key="8"/>
<evidence type="ECO:0000312" key="9">
    <source>
        <dbReference type="MGI" id="MGI:2660847"/>
    </source>
</evidence>
<reference key="1">
    <citation type="submission" date="2004-03" db="EMBL/GenBank/DDBJ databases">
        <title>Mus musculus small intestine sodium dependent multivitamin transporter.</title>
        <authorList>
            <person name="Balamurugan K."/>
            <person name="Said H.M."/>
        </authorList>
    </citation>
    <scope>NUCLEOTIDE SEQUENCE [MRNA]</scope>
    <source>
        <strain>BALB/cJ x C57BL/6J</strain>
        <tissue>Small intestine</tissue>
    </source>
</reference>
<reference key="2">
    <citation type="journal article" date="2005" name="Science">
        <title>The transcriptional landscape of the mammalian genome.</title>
        <authorList>
            <person name="Carninci P."/>
            <person name="Kasukawa T."/>
            <person name="Katayama S."/>
            <person name="Gough J."/>
            <person name="Frith M.C."/>
            <person name="Maeda N."/>
            <person name="Oyama R."/>
            <person name="Ravasi T."/>
            <person name="Lenhard B."/>
            <person name="Wells C."/>
            <person name="Kodzius R."/>
            <person name="Shimokawa K."/>
            <person name="Bajic V.B."/>
            <person name="Brenner S.E."/>
            <person name="Batalov S."/>
            <person name="Forrest A.R."/>
            <person name="Zavolan M."/>
            <person name="Davis M.J."/>
            <person name="Wilming L.G."/>
            <person name="Aidinis V."/>
            <person name="Allen J.E."/>
            <person name="Ambesi-Impiombato A."/>
            <person name="Apweiler R."/>
            <person name="Aturaliya R.N."/>
            <person name="Bailey T.L."/>
            <person name="Bansal M."/>
            <person name="Baxter L."/>
            <person name="Beisel K.W."/>
            <person name="Bersano T."/>
            <person name="Bono H."/>
            <person name="Chalk A.M."/>
            <person name="Chiu K.P."/>
            <person name="Choudhary V."/>
            <person name="Christoffels A."/>
            <person name="Clutterbuck D.R."/>
            <person name="Crowe M.L."/>
            <person name="Dalla E."/>
            <person name="Dalrymple B.P."/>
            <person name="de Bono B."/>
            <person name="Della Gatta G."/>
            <person name="di Bernardo D."/>
            <person name="Down T."/>
            <person name="Engstrom P."/>
            <person name="Fagiolini M."/>
            <person name="Faulkner G."/>
            <person name="Fletcher C.F."/>
            <person name="Fukushima T."/>
            <person name="Furuno M."/>
            <person name="Futaki S."/>
            <person name="Gariboldi M."/>
            <person name="Georgii-Hemming P."/>
            <person name="Gingeras T.R."/>
            <person name="Gojobori T."/>
            <person name="Green R.E."/>
            <person name="Gustincich S."/>
            <person name="Harbers M."/>
            <person name="Hayashi Y."/>
            <person name="Hensch T.K."/>
            <person name="Hirokawa N."/>
            <person name="Hill D."/>
            <person name="Huminiecki L."/>
            <person name="Iacono M."/>
            <person name="Ikeo K."/>
            <person name="Iwama A."/>
            <person name="Ishikawa T."/>
            <person name="Jakt M."/>
            <person name="Kanapin A."/>
            <person name="Katoh M."/>
            <person name="Kawasawa Y."/>
            <person name="Kelso J."/>
            <person name="Kitamura H."/>
            <person name="Kitano H."/>
            <person name="Kollias G."/>
            <person name="Krishnan S.P."/>
            <person name="Kruger A."/>
            <person name="Kummerfeld S.K."/>
            <person name="Kurochkin I.V."/>
            <person name="Lareau L.F."/>
            <person name="Lazarevic D."/>
            <person name="Lipovich L."/>
            <person name="Liu J."/>
            <person name="Liuni S."/>
            <person name="McWilliam S."/>
            <person name="Madan Babu M."/>
            <person name="Madera M."/>
            <person name="Marchionni L."/>
            <person name="Matsuda H."/>
            <person name="Matsuzawa S."/>
            <person name="Miki H."/>
            <person name="Mignone F."/>
            <person name="Miyake S."/>
            <person name="Morris K."/>
            <person name="Mottagui-Tabar S."/>
            <person name="Mulder N."/>
            <person name="Nakano N."/>
            <person name="Nakauchi H."/>
            <person name="Ng P."/>
            <person name="Nilsson R."/>
            <person name="Nishiguchi S."/>
            <person name="Nishikawa S."/>
            <person name="Nori F."/>
            <person name="Ohara O."/>
            <person name="Okazaki Y."/>
            <person name="Orlando V."/>
            <person name="Pang K.C."/>
            <person name="Pavan W.J."/>
            <person name="Pavesi G."/>
            <person name="Pesole G."/>
            <person name="Petrovsky N."/>
            <person name="Piazza S."/>
            <person name="Reed J."/>
            <person name="Reid J.F."/>
            <person name="Ring B.Z."/>
            <person name="Ringwald M."/>
            <person name="Rost B."/>
            <person name="Ruan Y."/>
            <person name="Salzberg S.L."/>
            <person name="Sandelin A."/>
            <person name="Schneider C."/>
            <person name="Schoenbach C."/>
            <person name="Sekiguchi K."/>
            <person name="Semple C.A."/>
            <person name="Seno S."/>
            <person name="Sessa L."/>
            <person name="Sheng Y."/>
            <person name="Shibata Y."/>
            <person name="Shimada H."/>
            <person name="Shimada K."/>
            <person name="Silva D."/>
            <person name="Sinclair B."/>
            <person name="Sperling S."/>
            <person name="Stupka E."/>
            <person name="Sugiura K."/>
            <person name="Sultana R."/>
            <person name="Takenaka Y."/>
            <person name="Taki K."/>
            <person name="Tammoja K."/>
            <person name="Tan S.L."/>
            <person name="Tang S."/>
            <person name="Taylor M.S."/>
            <person name="Tegner J."/>
            <person name="Teichmann S.A."/>
            <person name="Ueda H.R."/>
            <person name="van Nimwegen E."/>
            <person name="Verardo R."/>
            <person name="Wei C.L."/>
            <person name="Yagi K."/>
            <person name="Yamanishi H."/>
            <person name="Zabarovsky E."/>
            <person name="Zhu S."/>
            <person name="Zimmer A."/>
            <person name="Hide W."/>
            <person name="Bult C."/>
            <person name="Grimmond S.M."/>
            <person name="Teasdale R.D."/>
            <person name="Liu E.T."/>
            <person name="Brusic V."/>
            <person name="Quackenbush J."/>
            <person name="Wahlestedt C."/>
            <person name="Mattick J.S."/>
            <person name="Hume D.A."/>
            <person name="Kai C."/>
            <person name="Sasaki D."/>
            <person name="Tomaru Y."/>
            <person name="Fukuda S."/>
            <person name="Kanamori-Katayama M."/>
            <person name="Suzuki M."/>
            <person name="Aoki J."/>
            <person name="Arakawa T."/>
            <person name="Iida J."/>
            <person name="Imamura K."/>
            <person name="Itoh M."/>
            <person name="Kato T."/>
            <person name="Kawaji H."/>
            <person name="Kawagashira N."/>
            <person name="Kawashima T."/>
            <person name="Kojima M."/>
            <person name="Kondo S."/>
            <person name="Konno H."/>
            <person name="Nakano K."/>
            <person name="Ninomiya N."/>
            <person name="Nishio T."/>
            <person name="Okada M."/>
            <person name="Plessy C."/>
            <person name="Shibata K."/>
            <person name="Shiraki T."/>
            <person name="Suzuki S."/>
            <person name="Tagami M."/>
            <person name="Waki K."/>
            <person name="Watahiki A."/>
            <person name="Okamura-Oho Y."/>
            <person name="Suzuki H."/>
            <person name="Kawai J."/>
            <person name="Hayashizaki Y."/>
        </authorList>
    </citation>
    <scope>NUCLEOTIDE SEQUENCE [LARGE SCALE MRNA]</scope>
    <source>
        <strain>C57BL/6J</strain>
        <strain>NOD</strain>
        <tissue>Embryo</tissue>
        <tissue>Thymus</tissue>
    </source>
</reference>
<reference key="3">
    <citation type="submission" date="2005-07" db="EMBL/GenBank/DDBJ databases">
        <authorList>
            <person name="Mural R.J."/>
            <person name="Adams M.D."/>
            <person name="Myers E.W."/>
            <person name="Smith H.O."/>
            <person name="Venter J.C."/>
        </authorList>
    </citation>
    <scope>NUCLEOTIDE SEQUENCE [LARGE SCALE GENOMIC DNA]</scope>
</reference>
<reference key="4">
    <citation type="journal article" date="2004" name="Genome Res.">
        <title>The status, quality, and expansion of the NIH full-length cDNA project: the Mammalian Gene Collection (MGC).</title>
        <authorList>
            <consortium name="The MGC Project Team"/>
        </authorList>
    </citation>
    <scope>NUCLEOTIDE SEQUENCE [LARGE SCALE MRNA]</scope>
    <source>
        <strain>C57BL/6J</strain>
    </source>
</reference>
<reference key="5">
    <citation type="journal article" date="2009" name="Immunity">
        <title>The phagosomal proteome in interferon-gamma-activated macrophages.</title>
        <authorList>
            <person name="Trost M."/>
            <person name="English L."/>
            <person name="Lemieux S."/>
            <person name="Courcelles M."/>
            <person name="Desjardins M."/>
            <person name="Thibault P."/>
        </authorList>
    </citation>
    <scope>IDENTIFICATION BY MASS SPECTROMETRY [LARGE SCALE ANALYSIS]</scope>
</reference>
<reference key="6">
    <citation type="journal article" date="2010" name="Cell">
        <title>A tissue-specific atlas of mouse protein phosphorylation and expression.</title>
        <authorList>
            <person name="Huttlin E.L."/>
            <person name="Jedrychowski M.P."/>
            <person name="Elias J.E."/>
            <person name="Goswami T."/>
            <person name="Rad R."/>
            <person name="Beausoleil S.A."/>
            <person name="Villen J."/>
            <person name="Haas W."/>
            <person name="Sowa M.E."/>
            <person name="Gygi S.P."/>
        </authorList>
    </citation>
    <scope>IDENTIFICATION BY MASS SPECTROMETRY [LARGE SCALE ANALYSIS]</scope>
    <source>
        <tissue>Brain</tissue>
        <tissue>Brown adipose tissue</tissue>
        <tissue>Kidney</tissue>
    </source>
</reference>
<reference key="7">
    <citation type="journal article" date="2013" name="Am. J. Physiol.">
        <title>Conditional knockout of the Slc5a6 gene in mouse intestine impairs biotin absorption.</title>
        <authorList>
            <person name="Ghosal A."/>
            <person name="Lambrecht N."/>
            <person name="Subramanya S.B."/>
            <person name="Kapadia R."/>
            <person name="Said H.M."/>
        </authorList>
    </citation>
    <scope>FUNCTION</scope>
    <scope>TRANSPORTER ACTIVITY</scope>
    <scope>TISSUE SPECIFICITY</scope>
    <scope>DISRUPTION PHENOTYPE</scope>
</reference>
<reference key="8">
    <citation type="journal article" date="2016" name="Am. J. Physiol.">
        <title>Role of the sodium-dependent multivitamin transporter (SMVT) in the maintenance of intestinal mucosal integrity.</title>
        <authorList>
            <person name="Sabui S."/>
            <person name="Bohl J.A."/>
            <person name="Kapadia R."/>
            <person name="Cogburn K."/>
            <person name="Ghosal A."/>
            <person name="Lambrecht N.W."/>
            <person name="Said H.M."/>
        </authorList>
    </citation>
    <scope>FUNCTION</scope>
    <scope>DISRUPTION PHENOTYPE</scope>
</reference>
<reference key="9">
    <citation type="journal article" date="2017" name="Am. J. Physiol.">
        <title>Lipopolysaccharide inhibits colonic biotin uptake via interference with membrane expression of its transporter: a role for a casein kinase 2-mediated pathway.</title>
        <authorList>
            <person name="Lakhan R."/>
            <person name="Said H.M."/>
        </authorList>
    </citation>
    <scope>TISSUE SPECIFICITY</scope>
</reference>
<protein>
    <recommendedName>
        <fullName evidence="6">Sodium-dependent multivitamin transporter</fullName>
        <shortName evidence="1">Na(+)-dependent multivitamin transporter</shortName>
    </recommendedName>
    <alternativeName>
        <fullName evidence="7">Solute carrier family 5 member 6</fullName>
    </alternativeName>
</protein>
<gene>
    <name evidence="9" type="primary">Slc5a6</name>
</gene>